<reference key="1">
    <citation type="journal article" date="2005" name="Nat. Biotechnol.">
        <title>The complete genome sequence of the meat-borne lactic acid bacterium Lactobacillus sakei 23K.</title>
        <authorList>
            <person name="Chaillou S."/>
            <person name="Champomier-Verges M.-C."/>
            <person name="Cornet M."/>
            <person name="Crutz-Le Coq A.-M."/>
            <person name="Dudez A.-M."/>
            <person name="Martin V."/>
            <person name="Beaufils S."/>
            <person name="Darbon-Rongere E."/>
            <person name="Bossy R."/>
            <person name="Loux V."/>
            <person name="Zagorec M."/>
        </authorList>
    </citation>
    <scope>NUCLEOTIDE SEQUENCE [LARGE SCALE GENOMIC DNA]</scope>
    <source>
        <strain>23K</strain>
    </source>
</reference>
<keyword id="KW-0413">Isomerase</keyword>
<keyword id="KW-1185">Reference proteome</keyword>
<protein>
    <recommendedName>
        <fullName evidence="1">Uronate isomerase</fullName>
        <ecNumber evidence="1">5.3.1.12</ecNumber>
    </recommendedName>
    <alternativeName>
        <fullName evidence="1">Glucuronate isomerase</fullName>
    </alternativeName>
    <alternativeName>
        <fullName evidence="1">Uronic isomerase</fullName>
    </alternativeName>
</protein>
<name>UXAC_LATSS</name>
<sequence length="471" mass="54482">MQLLDDDFLLDNDMAKTLYHDYAAQMPIIDFHCHLNPSEIYQNKNYTNITRIWLNEGTYGDHYKWRLMRANGVDEKYITGDGDDYLKFIEWAKTIENAYGNPLYEWTHLELRRFFHIDERLTAESAPRIWEKANQLLQTDDFKPRQLIKNSNVQVVCTTDDPASDLHYHQLLKPEEAANGFKTLPAMRPDQLMQIDRDGFGDYLKTLGKVAGVEIHDFATIVTALTQRFEFFNKMGGRLSDHSLLTYHFEEATPAELDAIVAKGINNAALSEHEINQYLTMLLEALMKLNTQFNWTMQFHINSDRDLNRPMFAKIGPDTGYDAVGTQPDIVNHISALYTKMQQTEDVPKSIFYSLNSNDWLELATMMGCFQGGTTQKLQLGAGWWFNDTAEGMTQQLQVFAQQSLLPHFVGMLTDSRSFLSYPRHEYFRRVLCSFYGRLVEQGRVPNDAAELGRVVQNIAYNNAHDYFDFF</sequence>
<dbReference type="EC" id="5.3.1.12" evidence="1"/>
<dbReference type="EMBL" id="CR936503">
    <property type="protein sequence ID" value="CAI54426.1"/>
    <property type="molecule type" value="Genomic_DNA"/>
</dbReference>
<dbReference type="RefSeq" id="WP_011373840.1">
    <property type="nucleotide sequence ID" value="NC_007576.1"/>
</dbReference>
<dbReference type="SMR" id="Q38ZF1"/>
<dbReference type="STRING" id="314315.LCA_0129"/>
<dbReference type="KEGG" id="lsa:LCA_0129"/>
<dbReference type="eggNOG" id="COG1904">
    <property type="taxonomic scope" value="Bacteria"/>
</dbReference>
<dbReference type="HOGENOM" id="CLU_044465_1_0_9"/>
<dbReference type="OrthoDB" id="9766564at2"/>
<dbReference type="UniPathway" id="UPA00246"/>
<dbReference type="Proteomes" id="UP000002707">
    <property type="component" value="Chromosome"/>
</dbReference>
<dbReference type="GO" id="GO:0008880">
    <property type="term" value="F:glucuronate isomerase activity"/>
    <property type="evidence" value="ECO:0007669"/>
    <property type="project" value="UniProtKB-UniRule"/>
</dbReference>
<dbReference type="GO" id="GO:0019698">
    <property type="term" value="P:D-galacturonate catabolic process"/>
    <property type="evidence" value="ECO:0007669"/>
    <property type="project" value="TreeGrafter"/>
</dbReference>
<dbReference type="GO" id="GO:0042840">
    <property type="term" value="P:D-glucuronate catabolic process"/>
    <property type="evidence" value="ECO:0007669"/>
    <property type="project" value="TreeGrafter"/>
</dbReference>
<dbReference type="Gene3D" id="3.20.20.140">
    <property type="entry name" value="Metal-dependent hydrolases"/>
    <property type="match status" value="1"/>
</dbReference>
<dbReference type="Gene3D" id="1.10.2020.10">
    <property type="entry name" value="uronate isomerase, domain 2, chain A"/>
    <property type="match status" value="1"/>
</dbReference>
<dbReference type="HAMAP" id="MF_00675">
    <property type="entry name" value="UxaC"/>
    <property type="match status" value="1"/>
</dbReference>
<dbReference type="InterPro" id="IPR032466">
    <property type="entry name" value="Metal_Hydrolase"/>
</dbReference>
<dbReference type="InterPro" id="IPR003766">
    <property type="entry name" value="Uronate_isomerase"/>
</dbReference>
<dbReference type="NCBIfam" id="NF002794">
    <property type="entry name" value="PRK02925.1"/>
    <property type="match status" value="1"/>
</dbReference>
<dbReference type="PANTHER" id="PTHR30068">
    <property type="entry name" value="URONATE ISOMERASE"/>
    <property type="match status" value="1"/>
</dbReference>
<dbReference type="PANTHER" id="PTHR30068:SF4">
    <property type="entry name" value="URONATE ISOMERASE"/>
    <property type="match status" value="1"/>
</dbReference>
<dbReference type="Pfam" id="PF02614">
    <property type="entry name" value="UxaC"/>
    <property type="match status" value="1"/>
</dbReference>
<dbReference type="SUPFAM" id="SSF51556">
    <property type="entry name" value="Metallo-dependent hydrolases"/>
    <property type="match status" value="1"/>
</dbReference>
<proteinExistence type="inferred from homology"/>
<feature type="chain" id="PRO_1000044772" description="Uronate isomerase">
    <location>
        <begin position="1"/>
        <end position="471"/>
    </location>
</feature>
<organism>
    <name type="scientific">Latilactobacillus sakei subsp. sakei (strain 23K)</name>
    <name type="common">Lactobacillus sakei subsp. sakei</name>
    <dbReference type="NCBI Taxonomy" id="314315"/>
    <lineage>
        <taxon>Bacteria</taxon>
        <taxon>Bacillati</taxon>
        <taxon>Bacillota</taxon>
        <taxon>Bacilli</taxon>
        <taxon>Lactobacillales</taxon>
        <taxon>Lactobacillaceae</taxon>
        <taxon>Latilactobacillus</taxon>
    </lineage>
</organism>
<gene>
    <name evidence="1" type="primary">uxaC</name>
    <name type="ordered locus">LCA_0129</name>
</gene>
<evidence type="ECO:0000255" key="1">
    <source>
        <dbReference type="HAMAP-Rule" id="MF_00675"/>
    </source>
</evidence>
<accession>Q38ZF1</accession>
<comment type="catalytic activity">
    <reaction evidence="1">
        <text>D-glucuronate = D-fructuronate</text>
        <dbReference type="Rhea" id="RHEA:13049"/>
        <dbReference type="ChEBI" id="CHEBI:58720"/>
        <dbReference type="ChEBI" id="CHEBI:59863"/>
        <dbReference type="EC" id="5.3.1.12"/>
    </reaction>
</comment>
<comment type="catalytic activity">
    <reaction evidence="1">
        <text>aldehydo-D-galacturonate = keto-D-tagaturonate</text>
        <dbReference type="Rhea" id="RHEA:27702"/>
        <dbReference type="ChEBI" id="CHEBI:12952"/>
        <dbReference type="ChEBI" id="CHEBI:17886"/>
        <dbReference type="EC" id="5.3.1.12"/>
    </reaction>
</comment>
<comment type="pathway">
    <text evidence="1">Carbohydrate metabolism; pentose and glucuronate interconversion.</text>
</comment>
<comment type="similarity">
    <text evidence="1">Belongs to the metallo-dependent hydrolases superfamily. Uronate isomerase family.</text>
</comment>